<protein>
    <recommendedName>
        <fullName evidence="1">Orotate phosphoribosyltransferase</fullName>
        <shortName evidence="1">OPRT</shortName>
        <shortName evidence="1">OPRTase</shortName>
        <ecNumber evidence="1">2.4.2.10</ecNumber>
    </recommendedName>
</protein>
<name>PYRE_CAUVC</name>
<gene>
    <name evidence="1" type="primary">pyrE</name>
    <name type="ordered locus">CC_1555</name>
</gene>
<dbReference type="EC" id="2.4.2.10" evidence="1"/>
<dbReference type="EMBL" id="AE005673">
    <property type="protein sequence ID" value="AAK23534.1"/>
    <property type="molecule type" value="Genomic_DNA"/>
</dbReference>
<dbReference type="PIR" id="B87442">
    <property type="entry name" value="B87442"/>
</dbReference>
<dbReference type="RefSeq" id="NP_420366.1">
    <property type="nucleotide sequence ID" value="NC_002696.2"/>
</dbReference>
<dbReference type="RefSeq" id="WP_010919429.1">
    <property type="nucleotide sequence ID" value="NC_002696.2"/>
</dbReference>
<dbReference type="SMR" id="Q9A810"/>
<dbReference type="STRING" id="190650.CC_1555"/>
<dbReference type="EnsemblBacteria" id="AAK23534">
    <property type="protein sequence ID" value="AAK23534"/>
    <property type="gene ID" value="CC_1555"/>
</dbReference>
<dbReference type="KEGG" id="ccr:CC_1555"/>
<dbReference type="PATRIC" id="fig|190650.5.peg.1583"/>
<dbReference type="eggNOG" id="COG0461">
    <property type="taxonomic scope" value="Bacteria"/>
</dbReference>
<dbReference type="HOGENOM" id="CLU_074878_3_0_5"/>
<dbReference type="BioCyc" id="CAULO:CC1555-MONOMER"/>
<dbReference type="UniPathway" id="UPA00070">
    <property type="reaction ID" value="UER00119"/>
</dbReference>
<dbReference type="Proteomes" id="UP000001816">
    <property type="component" value="Chromosome"/>
</dbReference>
<dbReference type="GO" id="GO:0000287">
    <property type="term" value="F:magnesium ion binding"/>
    <property type="evidence" value="ECO:0007669"/>
    <property type="project" value="UniProtKB-UniRule"/>
</dbReference>
<dbReference type="GO" id="GO:0004588">
    <property type="term" value="F:orotate phosphoribosyltransferase activity"/>
    <property type="evidence" value="ECO:0007669"/>
    <property type="project" value="UniProtKB-UniRule"/>
</dbReference>
<dbReference type="GO" id="GO:0044205">
    <property type="term" value="P:'de novo' UMP biosynthetic process"/>
    <property type="evidence" value="ECO:0007669"/>
    <property type="project" value="UniProtKB-UniRule"/>
</dbReference>
<dbReference type="GO" id="GO:0019856">
    <property type="term" value="P:pyrimidine nucleobase biosynthetic process"/>
    <property type="evidence" value="ECO:0007669"/>
    <property type="project" value="InterPro"/>
</dbReference>
<dbReference type="CDD" id="cd06223">
    <property type="entry name" value="PRTases_typeI"/>
    <property type="match status" value="1"/>
</dbReference>
<dbReference type="Gene3D" id="3.40.50.2020">
    <property type="match status" value="1"/>
</dbReference>
<dbReference type="HAMAP" id="MF_01208">
    <property type="entry name" value="PyrE"/>
    <property type="match status" value="1"/>
</dbReference>
<dbReference type="InterPro" id="IPR023031">
    <property type="entry name" value="OPRT"/>
</dbReference>
<dbReference type="InterPro" id="IPR006273">
    <property type="entry name" value="Orotate_PRibTrfase_bac"/>
</dbReference>
<dbReference type="InterPro" id="IPR000836">
    <property type="entry name" value="PRibTrfase_dom"/>
</dbReference>
<dbReference type="InterPro" id="IPR029057">
    <property type="entry name" value="PRTase-like"/>
</dbReference>
<dbReference type="NCBIfam" id="TIGR01367">
    <property type="entry name" value="pyrE_Therm"/>
    <property type="match status" value="1"/>
</dbReference>
<dbReference type="PANTHER" id="PTHR19278">
    <property type="entry name" value="OROTATE PHOSPHORIBOSYLTRANSFERASE"/>
    <property type="match status" value="1"/>
</dbReference>
<dbReference type="PANTHER" id="PTHR19278:SF9">
    <property type="entry name" value="URIDINE 5'-MONOPHOSPHATE SYNTHASE"/>
    <property type="match status" value="1"/>
</dbReference>
<dbReference type="Pfam" id="PF00156">
    <property type="entry name" value="Pribosyltran"/>
    <property type="match status" value="1"/>
</dbReference>
<dbReference type="SUPFAM" id="SSF53271">
    <property type="entry name" value="PRTase-like"/>
    <property type="match status" value="1"/>
</dbReference>
<dbReference type="PROSITE" id="PS00103">
    <property type="entry name" value="PUR_PYR_PR_TRANSFER"/>
    <property type="match status" value="1"/>
</dbReference>
<keyword id="KW-0328">Glycosyltransferase</keyword>
<keyword id="KW-0460">Magnesium</keyword>
<keyword id="KW-0665">Pyrimidine biosynthesis</keyword>
<keyword id="KW-1185">Reference proteome</keyword>
<keyword id="KW-0808">Transferase</keyword>
<evidence type="ECO:0000255" key="1">
    <source>
        <dbReference type="HAMAP-Rule" id="MF_01208"/>
    </source>
</evidence>
<comment type="function">
    <text evidence="1">Catalyzes the transfer of a ribosyl phosphate group from 5-phosphoribose 1-diphosphate to orotate, leading to the formation of orotidine monophosphate (OMP).</text>
</comment>
<comment type="catalytic activity">
    <reaction evidence="1">
        <text>orotidine 5'-phosphate + diphosphate = orotate + 5-phospho-alpha-D-ribose 1-diphosphate</text>
        <dbReference type="Rhea" id="RHEA:10380"/>
        <dbReference type="ChEBI" id="CHEBI:30839"/>
        <dbReference type="ChEBI" id="CHEBI:33019"/>
        <dbReference type="ChEBI" id="CHEBI:57538"/>
        <dbReference type="ChEBI" id="CHEBI:58017"/>
        <dbReference type="EC" id="2.4.2.10"/>
    </reaction>
</comment>
<comment type="cofactor">
    <cofactor evidence="1">
        <name>Mg(2+)</name>
        <dbReference type="ChEBI" id="CHEBI:18420"/>
    </cofactor>
</comment>
<comment type="pathway">
    <text evidence="1">Pyrimidine metabolism; UMP biosynthesis via de novo pathway; UMP from orotate: step 1/2.</text>
</comment>
<comment type="subunit">
    <text evidence="1">Homodimer.</text>
</comment>
<comment type="similarity">
    <text evidence="1">Belongs to the purine/pyrimidine phosphoribosyltransferase family. PyrE subfamily.</text>
</comment>
<feature type="chain" id="PRO_0000110684" description="Orotate phosphoribosyltransferase">
    <location>
        <begin position="1"/>
        <end position="194"/>
    </location>
</feature>
<feature type="binding site" evidence="1">
    <location>
        <begin position="116"/>
        <end position="124"/>
    </location>
    <ligand>
        <name>5-phospho-alpha-D-ribose 1-diphosphate</name>
        <dbReference type="ChEBI" id="CHEBI:58017"/>
    </ligand>
</feature>
<feature type="binding site" evidence="1">
    <location>
        <position position="120"/>
    </location>
    <ligand>
        <name>orotate</name>
        <dbReference type="ChEBI" id="CHEBI:30839"/>
    </ligand>
</feature>
<feature type="binding site" evidence="1">
    <location>
        <position position="148"/>
    </location>
    <ligand>
        <name>orotate</name>
        <dbReference type="ChEBI" id="CHEBI:30839"/>
    </ligand>
</feature>
<proteinExistence type="inferred from homology"/>
<reference key="1">
    <citation type="journal article" date="2001" name="Proc. Natl. Acad. Sci. U.S.A.">
        <title>Complete genome sequence of Caulobacter crescentus.</title>
        <authorList>
            <person name="Nierman W.C."/>
            <person name="Feldblyum T.V."/>
            <person name="Laub M.T."/>
            <person name="Paulsen I.T."/>
            <person name="Nelson K.E."/>
            <person name="Eisen J.A."/>
            <person name="Heidelberg J.F."/>
            <person name="Alley M.R.K."/>
            <person name="Ohta N."/>
            <person name="Maddock J.R."/>
            <person name="Potocka I."/>
            <person name="Nelson W.C."/>
            <person name="Newton A."/>
            <person name="Stephens C."/>
            <person name="Phadke N.D."/>
            <person name="Ely B."/>
            <person name="DeBoy R.T."/>
            <person name="Dodson R.J."/>
            <person name="Durkin A.S."/>
            <person name="Gwinn M.L."/>
            <person name="Haft D.H."/>
            <person name="Kolonay J.F."/>
            <person name="Smit J."/>
            <person name="Craven M.B."/>
            <person name="Khouri H.M."/>
            <person name="Shetty J."/>
            <person name="Berry K.J."/>
            <person name="Utterback T.R."/>
            <person name="Tran K."/>
            <person name="Wolf A.M."/>
            <person name="Vamathevan J.J."/>
            <person name="Ermolaeva M.D."/>
            <person name="White O."/>
            <person name="Salzberg S.L."/>
            <person name="Venter J.C."/>
            <person name="Shapiro L."/>
            <person name="Fraser C.M."/>
        </authorList>
    </citation>
    <scope>NUCLEOTIDE SEQUENCE [LARGE SCALE GENOMIC DNA]</scope>
    <source>
        <strain>ATCC 19089 / CIP 103742 / CB 15</strain>
    </source>
</reference>
<accession>Q9A810</accession>
<organism>
    <name type="scientific">Caulobacter vibrioides (strain ATCC 19089 / CIP 103742 / CB 15)</name>
    <name type="common">Caulobacter crescentus</name>
    <dbReference type="NCBI Taxonomy" id="190650"/>
    <lineage>
        <taxon>Bacteria</taxon>
        <taxon>Pseudomonadati</taxon>
        <taxon>Pseudomonadota</taxon>
        <taxon>Alphaproteobacteria</taxon>
        <taxon>Caulobacterales</taxon>
        <taxon>Caulobacteraceae</taxon>
        <taxon>Caulobacter</taxon>
    </lineage>
</organism>
<sequence>MTNDDVLDEFRAAGALREGHFVLSSGLHSPVFLQKNLVFMRPERCERLCKALAQKIIATVGQVDVAVSPAVGGIIPGYETARHLNVPSIYVEREGGGFKFRRGFHLEPGQKVVMVEDIVTTGLSSRECIQAIKDAGGDVVAAACIVDRSGGKADVGVPLIALASLEVPAYPADALPPELAAIPIEDPGSRRLKG</sequence>